<reference key="1">
    <citation type="journal article" date="2007" name="Genome Biol.">
        <title>Characterization and modeling of the Haemophilus influenzae core and supragenomes based on the complete genomic sequences of Rd and 12 clinical nontypeable strains.</title>
        <authorList>
            <person name="Hogg J.S."/>
            <person name="Hu F.Z."/>
            <person name="Janto B."/>
            <person name="Boissy R."/>
            <person name="Hayes J."/>
            <person name="Keefe R."/>
            <person name="Post J.C."/>
            <person name="Ehrlich G.D."/>
        </authorList>
    </citation>
    <scope>NUCLEOTIDE SEQUENCE [LARGE SCALE GENOMIC DNA]</scope>
    <source>
        <strain>PittGG</strain>
    </source>
</reference>
<comment type="function">
    <text evidence="1">Catalyzes the formation of 4-diphosphocytidyl-2-C-methyl-D-erythritol from CTP and 2-C-methyl-D-erythritol 4-phosphate (MEP).</text>
</comment>
<comment type="catalytic activity">
    <reaction evidence="1">
        <text>2-C-methyl-D-erythritol 4-phosphate + CTP + H(+) = 4-CDP-2-C-methyl-D-erythritol + diphosphate</text>
        <dbReference type="Rhea" id="RHEA:13429"/>
        <dbReference type="ChEBI" id="CHEBI:15378"/>
        <dbReference type="ChEBI" id="CHEBI:33019"/>
        <dbReference type="ChEBI" id="CHEBI:37563"/>
        <dbReference type="ChEBI" id="CHEBI:57823"/>
        <dbReference type="ChEBI" id="CHEBI:58262"/>
        <dbReference type="EC" id="2.7.7.60"/>
    </reaction>
</comment>
<comment type="pathway">
    <text evidence="1">Isoprenoid biosynthesis; isopentenyl diphosphate biosynthesis via DXP pathway; isopentenyl diphosphate from 1-deoxy-D-xylulose 5-phosphate: step 2/6.</text>
</comment>
<comment type="similarity">
    <text evidence="1">Belongs to the IspD/TarI cytidylyltransferase family. IspD subfamily.</text>
</comment>
<name>ISPD_HAEIG</name>
<protein>
    <recommendedName>
        <fullName evidence="1">2-C-methyl-D-erythritol 4-phosphate cytidylyltransferase</fullName>
        <ecNumber evidence="1">2.7.7.60</ecNumber>
    </recommendedName>
    <alternativeName>
        <fullName evidence="1">4-diphosphocytidyl-2C-methyl-D-erythritol synthase</fullName>
    </alternativeName>
    <alternativeName>
        <fullName evidence="1">MEP cytidylyltransferase</fullName>
        <shortName evidence="1">MCT</shortName>
    </alternativeName>
</protein>
<organism>
    <name type="scientific">Haemophilus influenzae (strain PittGG)</name>
    <dbReference type="NCBI Taxonomy" id="374931"/>
    <lineage>
        <taxon>Bacteria</taxon>
        <taxon>Pseudomonadati</taxon>
        <taxon>Pseudomonadota</taxon>
        <taxon>Gammaproteobacteria</taxon>
        <taxon>Pasteurellales</taxon>
        <taxon>Pasteurellaceae</taxon>
        <taxon>Haemophilus</taxon>
    </lineage>
</organism>
<sequence length="225" mass="24548">MARSIIAVLPAAGVGSRMQADKPKQYLTLLGKTLLEHTLDVMLSYPAVSKIILAVSKDDPYISTLSLDPKIQLVEGGTTRAESVLNGLNAIAEKNAWVLVHDAARPCLQHADIDKLLAIEDKQGAILAIPVTDTIKRADNQQCIVKTEDRSQLWQAMTPQFFPVDILRDALSTGIQQGANITDEASAIELAGFRPHLVAGRSDNLKVTRPEDLALAEFYLTRNKL</sequence>
<feature type="chain" id="PRO_1000022928" description="2-C-methyl-D-erythritol 4-phosphate cytidylyltransferase">
    <location>
        <begin position="1"/>
        <end position="225"/>
    </location>
</feature>
<feature type="site" description="Transition state stabilizer" evidence="1">
    <location>
        <position position="17"/>
    </location>
</feature>
<feature type="site" description="Transition state stabilizer" evidence="1">
    <location>
        <position position="24"/>
    </location>
</feature>
<feature type="site" description="Positions MEP for the nucleophilic attack" evidence="1">
    <location>
        <position position="150"/>
    </location>
</feature>
<feature type="site" description="Positions MEP for the nucleophilic attack" evidence="1">
    <location>
        <position position="206"/>
    </location>
</feature>
<gene>
    <name evidence="1" type="primary">ispD</name>
    <name type="ordered locus">CGSHiGG_06635</name>
</gene>
<accession>A5UHG1</accession>
<evidence type="ECO:0000255" key="1">
    <source>
        <dbReference type="HAMAP-Rule" id="MF_00108"/>
    </source>
</evidence>
<keyword id="KW-0414">Isoprene biosynthesis</keyword>
<keyword id="KW-0548">Nucleotidyltransferase</keyword>
<keyword id="KW-0808">Transferase</keyword>
<proteinExistence type="inferred from homology"/>
<dbReference type="EC" id="2.7.7.60" evidence="1"/>
<dbReference type="EMBL" id="CP000672">
    <property type="protein sequence ID" value="ABR00217.1"/>
    <property type="molecule type" value="Genomic_DNA"/>
</dbReference>
<dbReference type="SMR" id="A5UHG1"/>
<dbReference type="KEGG" id="hiq:CGSHiGG_06635"/>
<dbReference type="HOGENOM" id="CLU_061281_3_1_6"/>
<dbReference type="UniPathway" id="UPA00056">
    <property type="reaction ID" value="UER00093"/>
</dbReference>
<dbReference type="Proteomes" id="UP000001990">
    <property type="component" value="Chromosome"/>
</dbReference>
<dbReference type="GO" id="GO:0050518">
    <property type="term" value="F:2-C-methyl-D-erythritol 4-phosphate cytidylyltransferase activity"/>
    <property type="evidence" value="ECO:0007669"/>
    <property type="project" value="UniProtKB-UniRule"/>
</dbReference>
<dbReference type="GO" id="GO:0019288">
    <property type="term" value="P:isopentenyl diphosphate biosynthetic process, methylerythritol 4-phosphate pathway"/>
    <property type="evidence" value="ECO:0007669"/>
    <property type="project" value="UniProtKB-UniRule"/>
</dbReference>
<dbReference type="CDD" id="cd02516">
    <property type="entry name" value="CDP-ME_synthetase"/>
    <property type="match status" value="1"/>
</dbReference>
<dbReference type="FunFam" id="3.90.550.10:FF:000003">
    <property type="entry name" value="2-C-methyl-D-erythritol 4-phosphate cytidylyltransferase"/>
    <property type="match status" value="1"/>
</dbReference>
<dbReference type="Gene3D" id="3.90.550.10">
    <property type="entry name" value="Spore Coat Polysaccharide Biosynthesis Protein SpsA, Chain A"/>
    <property type="match status" value="1"/>
</dbReference>
<dbReference type="HAMAP" id="MF_00108">
    <property type="entry name" value="IspD"/>
    <property type="match status" value="1"/>
</dbReference>
<dbReference type="InterPro" id="IPR001228">
    <property type="entry name" value="IspD"/>
</dbReference>
<dbReference type="InterPro" id="IPR034683">
    <property type="entry name" value="IspD/TarI"/>
</dbReference>
<dbReference type="InterPro" id="IPR050088">
    <property type="entry name" value="IspD/TarI_cytidylyltransf_bact"/>
</dbReference>
<dbReference type="InterPro" id="IPR018294">
    <property type="entry name" value="ISPD_synthase_CS"/>
</dbReference>
<dbReference type="InterPro" id="IPR029044">
    <property type="entry name" value="Nucleotide-diphossugar_trans"/>
</dbReference>
<dbReference type="NCBIfam" id="TIGR00453">
    <property type="entry name" value="ispD"/>
    <property type="match status" value="1"/>
</dbReference>
<dbReference type="PANTHER" id="PTHR32125">
    <property type="entry name" value="2-C-METHYL-D-ERYTHRITOL 4-PHOSPHATE CYTIDYLYLTRANSFERASE, CHLOROPLASTIC"/>
    <property type="match status" value="1"/>
</dbReference>
<dbReference type="PANTHER" id="PTHR32125:SF4">
    <property type="entry name" value="2-C-METHYL-D-ERYTHRITOL 4-PHOSPHATE CYTIDYLYLTRANSFERASE, CHLOROPLASTIC"/>
    <property type="match status" value="1"/>
</dbReference>
<dbReference type="Pfam" id="PF01128">
    <property type="entry name" value="IspD"/>
    <property type="match status" value="1"/>
</dbReference>
<dbReference type="SUPFAM" id="SSF53448">
    <property type="entry name" value="Nucleotide-diphospho-sugar transferases"/>
    <property type="match status" value="1"/>
</dbReference>
<dbReference type="PROSITE" id="PS01295">
    <property type="entry name" value="ISPD"/>
    <property type="match status" value="1"/>
</dbReference>